<comment type="function">
    <text evidence="1">Catalyzes the N-acylation of UDP-3-O-acylglucosamine using 3-hydroxyacyl-ACP as the acyl donor. Is involved in the biosynthesis of lipid A, a phosphorylated glycolipid that anchors the lipopolysaccharide to the outer membrane of the cell.</text>
</comment>
<comment type="catalytic activity">
    <reaction evidence="1">
        <text>a UDP-3-O-[(3R)-3-hydroxyacyl]-alpha-D-glucosamine + a (3R)-hydroxyacyl-[ACP] = a UDP-2-N,3-O-bis[(3R)-3-hydroxyacyl]-alpha-D-glucosamine + holo-[ACP] + H(+)</text>
        <dbReference type="Rhea" id="RHEA:53836"/>
        <dbReference type="Rhea" id="RHEA-COMP:9685"/>
        <dbReference type="Rhea" id="RHEA-COMP:9945"/>
        <dbReference type="ChEBI" id="CHEBI:15378"/>
        <dbReference type="ChEBI" id="CHEBI:64479"/>
        <dbReference type="ChEBI" id="CHEBI:78827"/>
        <dbReference type="ChEBI" id="CHEBI:137740"/>
        <dbReference type="ChEBI" id="CHEBI:137748"/>
        <dbReference type="EC" id="2.3.1.191"/>
    </reaction>
</comment>
<comment type="pathway">
    <text evidence="1">Bacterial outer membrane biogenesis; LPS lipid A biosynthesis.</text>
</comment>
<comment type="subunit">
    <text evidence="1">Homotrimer.</text>
</comment>
<comment type="similarity">
    <text evidence="1">Belongs to the transferase hexapeptide repeat family. LpxD subfamily.</text>
</comment>
<name>LPXD_PARXL</name>
<keyword id="KW-0012">Acyltransferase</keyword>
<keyword id="KW-0441">Lipid A biosynthesis</keyword>
<keyword id="KW-0444">Lipid biosynthesis</keyword>
<keyword id="KW-0443">Lipid metabolism</keyword>
<keyword id="KW-1185">Reference proteome</keyword>
<keyword id="KW-0677">Repeat</keyword>
<keyword id="KW-0808">Transferase</keyword>
<evidence type="ECO:0000255" key="1">
    <source>
        <dbReference type="HAMAP-Rule" id="MF_00523"/>
    </source>
</evidence>
<evidence type="ECO:0000256" key="2">
    <source>
        <dbReference type="SAM" id="MobiDB-lite"/>
    </source>
</evidence>
<protein>
    <recommendedName>
        <fullName evidence="1">UDP-3-O-acylglucosamine N-acyltransferase</fullName>
        <ecNumber evidence="1">2.3.1.191</ecNumber>
    </recommendedName>
</protein>
<feature type="chain" id="PRO_0000264354" description="UDP-3-O-acylglucosamine N-acyltransferase">
    <location>
        <begin position="1"/>
        <end position="370"/>
    </location>
</feature>
<feature type="region of interest" description="Disordered" evidence="2">
    <location>
        <begin position="350"/>
        <end position="370"/>
    </location>
</feature>
<feature type="compositionally biased region" description="Low complexity" evidence="2">
    <location>
        <begin position="358"/>
        <end position="370"/>
    </location>
</feature>
<feature type="active site" description="Proton acceptor" evidence="1">
    <location>
        <position position="252"/>
    </location>
</feature>
<reference key="1">
    <citation type="journal article" date="2006" name="Proc. Natl. Acad. Sci. U.S.A.">
        <title>Burkholderia xenovorans LB400 harbors a multi-replicon, 9.73-Mbp genome shaped for versatility.</title>
        <authorList>
            <person name="Chain P.S.G."/>
            <person name="Denef V.J."/>
            <person name="Konstantinidis K.T."/>
            <person name="Vergez L.M."/>
            <person name="Agullo L."/>
            <person name="Reyes V.L."/>
            <person name="Hauser L."/>
            <person name="Cordova M."/>
            <person name="Gomez L."/>
            <person name="Gonzalez M."/>
            <person name="Land M."/>
            <person name="Lao V."/>
            <person name="Larimer F."/>
            <person name="LiPuma J.J."/>
            <person name="Mahenthiralingam E."/>
            <person name="Malfatti S.A."/>
            <person name="Marx C.J."/>
            <person name="Parnell J.J."/>
            <person name="Ramette A."/>
            <person name="Richardson P."/>
            <person name="Seeger M."/>
            <person name="Smith D."/>
            <person name="Spilker T."/>
            <person name="Sul W.J."/>
            <person name="Tsoi T.V."/>
            <person name="Ulrich L.E."/>
            <person name="Zhulin I.B."/>
            <person name="Tiedje J.M."/>
        </authorList>
    </citation>
    <scope>NUCLEOTIDE SEQUENCE [LARGE SCALE GENOMIC DNA]</scope>
    <source>
        <strain>LB400</strain>
    </source>
</reference>
<organism>
    <name type="scientific">Paraburkholderia xenovorans (strain LB400)</name>
    <dbReference type="NCBI Taxonomy" id="266265"/>
    <lineage>
        <taxon>Bacteria</taxon>
        <taxon>Pseudomonadati</taxon>
        <taxon>Pseudomonadota</taxon>
        <taxon>Betaproteobacteria</taxon>
        <taxon>Burkholderiales</taxon>
        <taxon>Burkholderiaceae</taxon>
        <taxon>Paraburkholderia</taxon>
    </lineage>
</organism>
<sequence>MAFTLEDIVQRFGGEVVGNGSQRVGSLAPLDQAGPDQLAFLANPKYLSQVETTRAGAVLINAEDLARLASRESRNFIVTPNPYAYFARVAQTFIDLAAPKAVPGVHPSATIDPSAQIAASAVIGPHVTVEAGAVIGENVRLDANVVIGRGTRIGADSHLYPNVAVYYGCKLGERVIVHAGAVIGSDGFGFAPDFVGEGDARTGSWVKIPQVGGVSIAADVEIGANTTIDRGAMADTIIEECVKIDNLVQIGHNCKVGAYTVIAGCAGIAGSTTIGRHCMIGGAVGIAGHVTLADYVIVTAKSGVSKSLLKPGMYTSAFPAVNHADWNKSAALLRNIDKLRDRIKALENAAAGRQDGPAANAASSSAGDKA</sequence>
<accession>Q13XC6</accession>
<proteinExistence type="inferred from homology"/>
<gene>
    <name evidence="1" type="primary">lpxD</name>
    <name type="ordered locus">Bxeno_A2725</name>
    <name type="ORF">Bxe_A1692</name>
</gene>
<dbReference type="EC" id="2.3.1.191" evidence="1"/>
<dbReference type="EMBL" id="CP000270">
    <property type="protein sequence ID" value="ABE31263.1"/>
    <property type="molecule type" value="Genomic_DNA"/>
</dbReference>
<dbReference type="RefSeq" id="WP_011488859.1">
    <property type="nucleotide sequence ID" value="NC_007951.1"/>
</dbReference>
<dbReference type="SMR" id="Q13XC6"/>
<dbReference type="STRING" id="266265.Bxe_A1692"/>
<dbReference type="KEGG" id="bxb:DR64_3857"/>
<dbReference type="KEGG" id="bxe:Bxe_A1692"/>
<dbReference type="PATRIC" id="fig|266265.5.peg.2855"/>
<dbReference type="eggNOG" id="COG1044">
    <property type="taxonomic scope" value="Bacteria"/>
</dbReference>
<dbReference type="OrthoDB" id="9784739at2"/>
<dbReference type="UniPathway" id="UPA00973"/>
<dbReference type="Proteomes" id="UP000001817">
    <property type="component" value="Chromosome 1"/>
</dbReference>
<dbReference type="GO" id="GO:0016020">
    <property type="term" value="C:membrane"/>
    <property type="evidence" value="ECO:0007669"/>
    <property type="project" value="GOC"/>
</dbReference>
<dbReference type="GO" id="GO:0016410">
    <property type="term" value="F:N-acyltransferase activity"/>
    <property type="evidence" value="ECO:0007669"/>
    <property type="project" value="InterPro"/>
</dbReference>
<dbReference type="GO" id="GO:0009245">
    <property type="term" value="P:lipid A biosynthetic process"/>
    <property type="evidence" value="ECO:0007669"/>
    <property type="project" value="UniProtKB-UniRule"/>
</dbReference>
<dbReference type="CDD" id="cd03352">
    <property type="entry name" value="LbH_LpxD"/>
    <property type="match status" value="1"/>
</dbReference>
<dbReference type="Gene3D" id="2.160.10.10">
    <property type="entry name" value="Hexapeptide repeat proteins"/>
    <property type="match status" value="1"/>
</dbReference>
<dbReference type="Gene3D" id="3.40.1390.10">
    <property type="entry name" value="MurE/MurF, N-terminal domain"/>
    <property type="match status" value="1"/>
</dbReference>
<dbReference type="HAMAP" id="MF_00523">
    <property type="entry name" value="LpxD"/>
    <property type="match status" value="1"/>
</dbReference>
<dbReference type="InterPro" id="IPR001451">
    <property type="entry name" value="Hexapep"/>
</dbReference>
<dbReference type="InterPro" id="IPR018357">
    <property type="entry name" value="Hexapep_transf_CS"/>
</dbReference>
<dbReference type="InterPro" id="IPR007691">
    <property type="entry name" value="LpxD"/>
</dbReference>
<dbReference type="InterPro" id="IPR011004">
    <property type="entry name" value="Trimer_LpxA-like_sf"/>
</dbReference>
<dbReference type="InterPro" id="IPR020573">
    <property type="entry name" value="UDP_GlcNAc_AcTrfase_non-rep"/>
</dbReference>
<dbReference type="NCBIfam" id="TIGR01853">
    <property type="entry name" value="lipid_A_lpxD"/>
    <property type="match status" value="1"/>
</dbReference>
<dbReference type="NCBIfam" id="NF002060">
    <property type="entry name" value="PRK00892.1"/>
    <property type="match status" value="1"/>
</dbReference>
<dbReference type="PANTHER" id="PTHR43378">
    <property type="entry name" value="UDP-3-O-ACYLGLUCOSAMINE N-ACYLTRANSFERASE"/>
    <property type="match status" value="1"/>
</dbReference>
<dbReference type="PANTHER" id="PTHR43378:SF2">
    <property type="entry name" value="UDP-3-O-ACYLGLUCOSAMINE N-ACYLTRANSFERASE 1, MITOCHONDRIAL-RELATED"/>
    <property type="match status" value="1"/>
</dbReference>
<dbReference type="Pfam" id="PF00132">
    <property type="entry name" value="Hexapep"/>
    <property type="match status" value="2"/>
</dbReference>
<dbReference type="Pfam" id="PF14602">
    <property type="entry name" value="Hexapep_2"/>
    <property type="match status" value="1"/>
</dbReference>
<dbReference type="Pfam" id="PF04613">
    <property type="entry name" value="LpxD"/>
    <property type="match status" value="1"/>
</dbReference>
<dbReference type="SUPFAM" id="SSF51161">
    <property type="entry name" value="Trimeric LpxA-like enzymes"/>
    <property type="match status" value="1"/>
</dbReference>
<dbReference type="PROSITE" id="PS00101">
    <property type="entry name" value="HEXAPEP_TRANSFERASES"/>
    <property type="match status" value="4"/>
</dbReference>